<comment type="function">
    <text evidence="1">Catalyzes the reduction of hydroxylamine to form NH(3) and H(2)O.</text>
</comment>
<comment type="catalytic activity">
    <reaction evidence="1">
        <text>A + NH4(+) + H2O = hydroxylamine + AH2 + H(+)</text>
        <dbReference type="Rhea" id="RHEA:22052"/>
        <dbReference type="ChEBI" id="CHEBI:13193"/>
        <dbReference type="ChEBI" id="CHEBI:15377"/>
        <dbReference type="ChEBI" id="CHEBI:15378"/>
        <dbReference type="ChEBI" id="CHEBI:15429"/>
        <dbReference type="ChEBI" id="CHEBI:17499"/>
        <dbReference type="ChEBI" id="CHEBI:28938"/>
        <dbReference type="EC" id="1.7.99.1"/>
    </reaction>
</comment>
<comment type="cofactor">
    <cofactor evidence="1">
        <name>[2Fe-2S] cluster</name>
        <dbReference type="ChEBI" id="CHEBI:190135"/>
    </cofactor>
    <text evidence="1">Binds 1 [2Fe-2S] cluster.</text>
</comment>
<comment type="cofactor">
    <cofactor evidence="1">
        <name>hybrid [4Fe-2O-2S] cluster</name>
        <dbReference type="ChEBI" id="CHEBI:60519"/>
    </cofactor>
    <text evidence="1">Binds 1 hybrid [4Fe-2O-2S] cluster.</text>
</comment>
<comment type="subcellular location">
    <subcellularLocation>
        <location evidence="1">Cytoplasm</location>
    </subcellularLocation>
</comment>
<comment type="similarity">
    <text evidence="1">Belongs to the HCP family.</text>
</comment>
<protein>
    <recommendedName>
        <fullName evidence="1">Hydroxylamine reductase</fullName>
        <ecNumber evidence="1">1.7.99.1</ecNumber>
    </recommendedName>
    <alternativeName>
        <fullName evidence="1">Hybrid-cluster protein</fullName>
        <shortName evidence="1">HCP</shortName>
    </alternativeName>
    <alternativeName>
        <fullName evidence="1">Prismane protein</fullName>
    </alternativeName>
</protein>
<gene>
    <name evidence="1" type="primary">hcp</name>
    <name type="ordered locus">SBO_0806</name>
</gene>
<dbReference type="EC" id="1.7.99.1" evidence="1"/>
<dbReference type="EMBL" id="CP000036">
    <property type="protein sequence ID" value="ABB65479.1"/>
    <property type="molecule type" value="Genomic_DNA"/>
</dbReference>
<dbReference type="SMR" id="Q323M9"/>
<dbReference type="KEGG" id="sbo:SBO_0806"/>
<dbReference type="HOGENOM" id="CLU_038344_2_0_6"/>
<dbReference type="Proteomes" id="UP000007067">
    <property type="component" value="Chromosome"/>
</dbReference>
<dbReference type="GO" id="GO:0005737">
    <property type="term" value="C:cytoplasm"/>
    <property type="evidence" value="ECO:0007669"/>
    <property type="project" value="UniProtKB-SubCell"/>
</dbReference>
<dbReference type="GO" id="GO:0051537">
    <property type="term" value="F:2 iron, 2 sulfur cluster binding"/>
    <property type="evidence" value="ECO:0007669"/>
    <property type="project" value="UniProtKB-KW"/>
</dbReference>
<dbReference type="GO" id="GO:0050418">
    <property type="term" value="F:hydroxylamine reductase activity"/>
    <property type="evidence" value="ECO:0007669"/>
    <property type="project" value="UniProtKB-UniRule"/>
</dbReference>
<dbReference type="GO" id="GO:0046872">
    <property type="term" value="F:metal ion binding"/>
    <property type="evidence" value="ECO:0007669"/>
    <property type="project" value="UniProtKB-KW"/>
</dbReference>
<dbReference type="GO" id="GO:0004601">
    <property type="term" value="F:peroxidase activity"/>
    <property type="evidence" value="ECO:0007669"/>
    <property type="project" value="TreeGrafter"/>
</dbReference>
<dbReference type="GO" id="GO:0042542">
    <property type="term" value="P:response to hydrogen peroxide"/>
    <property type="evidence" value="ECO:0007669"/>
    <property type="project" value="TreeGrafter"/>
</dbReference>
<dbReference type="CDD" id="cd01914">
    <property type="entry name" value="HCP"/>
    <property type="match status" value="1"/>
</dbReference>
<dbReference type="FunFam" id="1.20.1270.20:FF:000001">
    <property type="entry name" value="Hydroxylamine reductase"/>
    <property type="match status" value="1"/>
</dbReference>
<dbReference type="FunFam" id="1.20.1270.20:FF:000002">
    <property type="entry name" value="Hydroxylamine reductase"/>
    <property type="match status" value="1"/>
</dbReference>
<dbReference type="FunFam" id="3.40.50.2030:FF:000001">
    <property type="entry name" value="Hydroxylamine reductase"/>
    <property type="match status" value="1"/>
</dbReference>
<dbReference type="FunFam" id="3.40.50.2030:FF:000002">
    <property type="entry name" value="Hydroxylamine reductase"/>
    <property type="match status" value="1"/>
</dbReference>
<dbReference type="Gene3D" id="1.20.1270.20">
    <property type="match status" value="2"/>
</dbReference>
<dbReference type="Gene3D" id="3.40.50.2030">
    <property type="match status" value="2"/>
</dbReference>
<dbReference type="HAMAP" id="MF_00069">
    <property type="entry name" value="Hydroxylam_reduct"/>
    <property type="match status" value="1"/>
</dbReference>
<dbReference type="InterPro" id="IPR004137">
    <property type="entry name" value="HCP/CODH"/>
</dbReference>
<dbReference type="InterPro" id="IPR010048">
    <property type="entry name" value="Hydroxylam_reduct"/>
</dbReference>
<dbReference type="InterPro" id="IPR016099">
    <property type="entry name" value="Prismane-like_a/b-sand"/>
</dbReference>
<dbReference type="InterPro" id="IPR011254">
    <property type="entry name" value="Prismane-like_sf"/>
</dbReference>
<dbReference type="InterPro" id="IPR016100">
    <property type="entry name" value="Prismane_a-bundle"/>
</dbReference>
<dbReference type="NCBIfam" id="TIGR01703">
    <property type="entry name" value="hybrid_clust"/>
    <property type="match status" value="1"/>
</dbReference>
<dbReference type="NCBIfam" id="NF003658">
    <property type="entry name" value="PRK05290.1"/>
    <property type="match status" value="1"/>
</dbReference>
<dbReference type="PANTHER" id="PTHR30109">
    <property type="entry name" value="HYDROXYLAMINE REDUCTASE"/>
    <property type="match status" value="1"/>
</dbReference>
<dbReference type="PANTHER" id="PTHR30109:SF0">
    <property type="entry name" value="HYDROXYLAMINE REDUCTASE"/>
    <property type="match status" value="1"/>
</dbReference>
<dbReference type="Pfam" id="PF03063">
    <property type="entry name" value="Prismane"/>
    <property type="match status" value="1"/>
</dbReference>
<dbReference type="PIRSF" id="PIRSF000076">
    <property type="entry name" value="HCP"/>
    <property type="match status" value="1"/>
</dbReference>
<dbReference type="SUPFAM" id="SSF56821">
    <property type="entry name" value="Prismane protein-like"/>
    <property type="match status" value="1"/>
</dbReference>
<organism>
    <name type="scientific">Shigella boydii serotype 4 (strain Sb227)</name>
    <dbReference type="NCBI Taxonomy" id="300268"/>
    <lineage>
        <taxon>Bacteria</taxon>
        <taxon>Pseudomonadati</taxon>
        <taxon>Pseudomonadota</taxon>
        <taxon>Gammaproteobacteria</taxon>
        <taxon>Enterobacterales</taxon>
        <taxon>Enterobacteriaceae</taxon>
        <taxon>Shigella</taxon>
    </lineage>
</organism>
<name>HCP_SHIBS</name>
<accession>Q323M9</accession>
<reference key="1">
    <citation type="journal article" date="2005" name="Nucleic Acids Res.">
        <title>Genome dynamics and diversity of Shigella species, the etiologic agents of bacillary dysentery.</title>
        <authorList>
            <person name="Yang F."/>
            <person name="Yang J."/>
            <person name="Zhang X."/>
            <person name="Chen L."/>
            <person name="Jiang Y."/>
            <person name="Yan Y."/>
            <person name="Tang X."/>
            <person name="Wang J."/>
            <person name="Xiong Z."/>
            <person name="Dong J."/>
            <person name="Xue Y."/>
            <person name="Zhu Y."/>
            <person name="Xu X."/>
            <person name="Sun L."/>
            <person name="Chen S."/>
            <person name="Nie H."/>
            <person name="Peng J."/>
            <person name="Xu J."/>
            <person name="Wang Y."/>
            <person name="Yuan Z."/>
            <person name="Wen Y."/>
            <person name="Yao Z."/>
            <person name="Shen Y."/>
            <person name="Qiang B."/>
            <person name="Hou Y."/>
            <person name="Yu J."/>
            <person name="Jin Q."/>
        </authorList>
    </citation>
    <scope>NUCLEOTIDE SEQUENCE [LARGE SCALE GENOMIC DNA]</scope>
    <source>
        <strain>Sb227</strain>
    </source>
</reference>
<keyword id="KW-0001">2Fe-2S</keyword>
<keyword id="KW-0963">Cytoplasm</keyword>
<keyword id="KW-0408">Iron</keyword>
<keyword id="KW-0411">Iron-sulfur</keyword>
<keyword id="KW-0479">Metal-binding</keyword>
<keyword id="KW-0560">Oxidoreductase</keyword>
<sequence length="552" mass="60364">MIMFCVQCEQTIRTPAGNGCSYAQGMCGKTAETSDLQDLLIAALQGLSAWAVKAREYGIINHDVDSFAPRAFFSTLTNVNFDSPRIVGYAREAIALREALKAQCLAVDANARVDNPMADLQLVSDDLGELQRQAAEFTPNKDKAAIGENILGLRLLCLYGLKGAAAYMEHAHVLGQYDNDIYAQYHKIMAWLGTWPADMNALLECSMEIGQMNFKVMSILDAGETGKYGHPTPTQVNVKATAGKCILISGHDLKDLYNLLEQTEGTGVNVYTHGEMLPAHGYPELRKFKHLVGNYGSGWQNQQVEFARFPGPIVMTSNCIIDPTVSAYDDRIWTRSIVGWPGVRHLDGDDFSAVITQAQQMAGFPYSEIPHLITVGFGRQTLLGAADTLIDLVSREKLRHIFLLGGCDGARGERHYFTDFATIVPDDCLILTLACGKYRFNKLEFGDIEGLPRLVDAGQCNDAYSAIILAVTLAEKLGCGVNDLPLSLVLSWFEQKAIVILLTLLSLGVKNIVTGPTAPGFLTPDLLAVLNEKFGLRSITTVEEDMKQLLSA</sequence>
<evidence type="ECO:0000255" key="1">
    <source>
        <dbReference type="HAMAP-Rule" id="MF_00069"/>
    </source>
</evidence>
<feature type="chain" id="PRO_1000009172" description="Hydroxylamine reductase">
    <location>
        <begin position="1"/>
        <end position="552"/>
    </location>
</feature>
<feature type="binding site" evidence="1">
    <location>
        <position position="5"/>
    </location>
    <ligand>
        <name>[2Fe-2S] cluster</name>
        <dbReference type="ChEBI" id="CHEBI:190135"/>
    </ligand>
</feature>
<feature type="binding site" evidence="1">
    <location>
        <position position="8"/>
    </location>
    <ligand>
        <name>[2Fe-2S] cluster</name>
        <dbReference type="ChEBI" id="CHEBI:190135"/>
    </ligand>
</feature>
<feature type="binding site" evidence="1">
    <location>
        <position position="20"/>
    </location>
    <ligand>
        <name>[2Fe-2S] cluster</name>
        <dbReference type="ChEBI" id="CHEBI:190135"/>
    </ligand>
</feature>
<feature type="binding site" evidence="1">
    <location>
        <position position="27"/>
    </location>
    <ligand>
        <name>[2Fe-2S] cluster</name>
        <dbReference type="ChEBI" id="CHEBI:190135"/>
    </ligand>
</feature>
<feature type="binding site" evidence="1">
    <location>
        <position position="251"/>
    </location>
    <ligand>
        <name>hybrid [4Fe-2O-2S] cluster</name>
        <dbReference type="ChEBI" id="CHEBI:60519"/>
    </ligand>
</feature>
<feature type="binding site" evidence="1">
    <location>
        <position position="275"/>
    </location>
    <ligand>
        <name>hybrid [4Fe-2O-2S] cluster</name>
        <dbReference type="ChEBI" id="CHEBI:60519"/>
    </ligand>
</feature>
<feature type="binding site" evidence="1">
    <location>
        <position position="319"/>
    </location>
    <ligand>
        <name>hybrid [4Fe-2O-2S] cluster</name>
        <dbReference type="ChEBI" id="CHEBI:60519"/>
    </ligand>
</feature>
<feature type="binding site" description="via persulfide group" evidence="1">
    <location>
        <position position="407"/>
    </location>
    <ligand>
        <name>hybrid [4Fe-2O-2S] cluster</name>
        <dbReference type="ChEBI" id="CHEBI:60519"/>
    </ligand>
</feature>
<feature type="binding site" evidence="1">
    <location>
        <position position="435"/>
    </location>
    <ligand>
        <name>hybrid [4Fe-2O-2S] cluster</name>
        <dbReference type="ChEBI" id="CHEBI:60519"/>
    </ligand>
</feature>
<feature type="binding site" evidence="1">
    <location>
        <position position="460"/>
    </location>
    <ligand>
        <name>hybrid [4Fe-2O-2S] cluster</name>
        <dbReference type="ChEBI" id="CHEBI:60519"/>
    </ligand>
</feature>
<feature type="binding site" evidence="1">
    <location>
        <position position="494"/>
    </location>
    <ligand>
        <name>hybrid [4Fe-2O-2S] cluster</name>
        <dbReference type="ChEBI" id="CHEBI:60519"/>
    </ligand>
</feature>
<feature type="binding site" evidence="1">
    <location>
        <position position="496"/>
    </location>
    <ligand>
        <name>hybrid [4Fe-2O-2S] cluster</name>
        <dbReference type="ChEBI" id="CHEBI:60519"/>
    </ligand>
</feature>
<feature type="modified residue" description="Cysteine persulfide" evidence="1">
    <location>
        <position position="407"/>
    </location>
</feature>
<proteinExistence type="inferred from homology"/>